<dbReference type="EMBL" id="AL646052">
    <property type="protein sequence ID" value="CAD17106.1"/>
    <property type="molecule type" value="Genomic_DNA"/>
</dbReference>
<dbReference type="RefSeq" id="WP_011003202.1">
    <property type="nucleotide sequence ID" value="NC_003295.1"/>
</dbReference>
<dbReference type="SMR" id="Q8XU75"/>
<dbReference type="STRING" id="267608.RSc3318"/>
<dbReference type="EnsemblBacteria" id="CAD17106">
    <property type="protein sequence ID" value="CAD17106"/>
    <property type="gene ID" value="RSc3318"/>
</dbReference>
<dbReference type="KEGG" id="rso:RSc3318"/>
<dbReference type="eggNOG" id="COG0224">
    <property type="taxonomic scope" value="Bacteria"/>
</dbReference>
<dbReference type="HOGENOM" id="CLU_050669_0_1_4"/>
<dbReference type="Proteomes" id="UP000001436">
    <property type="component" value="Chromosome"/>
</dbReference>
<dbReference type="GO" id="GO:0005886">
    <property type="term" value="C:plasma membrane"/>
    <property type="evidence" value="ECO:0007669"/>
    <property type="project" value="UniProtKB-SubCell"/>
</dbReference>
<dbReference type="GO" id="GO:0045259">
    <property type="term" value="C:proton-transporting ATP synthase complex"/>
    <property type="evidence" value="ECO:0007669"/>
    <property type="project" value="UniProtKB-KW"/>
</dbReference>
<dbReference type="GO" id="GO:0005524">
    <property type="term" value="F:ATP binding"/>
    <property type="evidence" value="ECO:0007669"/>
    <property type="project" value="UniProtKB-UniRule"/>
</dbReference>
<dbReference type="GO" id="GO:0046933">
    <property type="term" value="F:proton-transporting ATP synthase activity, rotational mechanism"/>
    <property type="evidence" value="ECO:0007669"/>
    <property type="project" value="UniProtKB-UniRule"/>
</dbReference>
<dbReference type="GO" id="GO:0042777">
    <property type="term" value="P:proton motive force-driven plasma membrane ATP synthesis"/>
    <property type="evidence" value="ECO:0007669"/>
    <property type="project" value="UniProtKB-UniRule"/>
</dbReference>
<dbReference type="CDD" id="cd12151">
    <property type="entry name" value="F1-ATPase_gamma"/>
    <property type="match status" value="1"/>
</dbReference>
<dbReference type="FunFam" id="1.10.287.80:FF:000005">
    <property type="entry name" value="ATP synthase gamma chain"/>
    <property type="match status" value="1"/>
</dbReference>
<dbReference type="Gene3D" id="3.40.1380.10">
    <property type="match status" value="1"/>
</dbReference>
<dbReference type="Gene3D" id="1.10.287.80">
    <property type="entry name" value="ATP synthase, gamma subunit, helix hairpin domain"/>
    <property type="match status" value="2"/>
</dbReference>
<dbReference type="HAMAP" id="MF_00815">
    <property type="entry name" value="ATP_synth_gamma_bact"/>
    <property type="match status" value="1"/>
</dbReference>
<dbReference type="InterPro" id="IPR035968">
    <property type="entry name" value="ATP_synth_F1_ATPase_gsu"/>
</dbReference>
<dbReference type="InterPro" id="IPR000131">
    <property type="entry name" value="ATP_synth_F1_gsu"/>
</dbReference>
<dbReference type="InterPro" id="IPR023632">
    <property type="entry name" value="ATP_synth_F1_gsu_CS"/>
</dbReference>
<dbReference type="NCBIfam" id="TIGR01146">
    <property type="entry name" value="ATPsyn_F1gamma"/>
    <property type="match status" value="1"/>
</dbReference>
<dbReference type="NCBIfam" id="NF004144">
    <property type="entry name" value="PRK05621.1-1"/>
    <property type="match status" value="1"/>
</dbReference>
<dbReference type="PANTHER" id="PTHR11693">
    <property type="entry name" value="ATP SYNTHASE GAMMA CHAIN"/>
    <property type="match status" value="1"/>
</dbReference>
<dbReference type="PANTHER" id="PTHR11693:SF22">
    <property type="entry name" value="ATP SYNTHASE SUBUNIT GAMMA, MITOCHONDRIAL"/>
    <property type="match status" value="1"/>
</dbReference>
<dbReference type="Pfam" id="PF00231">
    <property type="entry name" value="ATP-synt"/>
    <property type="match status" value="1"/>
</dbReference>
<dbReference type="PRINTS" id="PR00126">
    <property type="entry name" value="ATPASEGAMMA"/>
</dbReference>
<dbReference type="SUPFAM" id="SSF52943">
    <property type="entry name" value="ATP synthase (F1-ATPase), gamma subunit"/>
    <property type="match status" value="1"/>
</dbReference>
<dbReference type="PROSITE" id="PS00153">
    <property type="entry name" value="ATPASE_GAMMA"/>
    <property type="match status" value="1"/>
</dbReference>
<comment type="function">
    <text evidence="1">Produces ATP from ADP in the presence of a proton gradient across the membrane. The gamma chain is believed to be important in regulating ATPase activity and the flow of protons through the CF(0) complex.</text>
</comment>
<comment type="subunit">
    <text evidence="1">F-type ATPases have 2 components, CF(1) - the catalytic core - and CF(0) - the membrane proton channel. CF(1) has five subunits: alpha(3), beta(3), gamma(1), delta(1), epsilon(1). CF(0) has three main subunits: a, b and c.</text>
</comment>
<comment type="subcellular location">
    <subcellularLocation>
        <location evidence="1">Cell inner membrane</location>
        <topology evidence="1">Peripheral membrane protein</topology>
    </subcellularLocation>
</comment>
<comment type="similarity">
    <text evidence="1">Belongs to the ATPase gamma chain family.</text>
</comment>
<organism>
    <name type="scientific">Ralstonia nicotianae (strain ATCC BAA-1114 / GMI1000)</name>
    <name type="common">Ralstonia solanacearum</name>
    <dbReference type="NCBI Taxonomy" id="267608"/>
    <lineage>
        <taxon>Bacteria</taxon>
        <taxon>Pseudomonadati</taxon>
        <taxon>Pseudomonadota</taxon>
        <taxon>Betaproteobacteria</taxon>
        <taxon>Burkholderiales</taxon>
        <taxon>Burkholderiaceae</taxon>
        <taxon>Ralstonia</taxon>
        <taxon>Ralstonia solanacearum species complex</taxon>
    </lineage>
</organism>
<feature type="chain" id="PRO_0000073353" description="ATP synthase gamma chain">
    <location>
        <begin position="1"/>
        <end position="291"/>
    </location>
</feature>
<gene>
    <name evidence="1" type="primary">atpG</name>
    <name type="ordered locus">RSc3318</name>
    <name type="ORF">RS02548</name>
</gene>
<name>ATPG_RALN1</name>
<proteinExistence type="inferred from homology"/>
<accession>Q8XU75</accession>
<keyword id="KW-0066">ATP synthesis</keyword>
<keyword id="KW-0997">Cell inner membrane</keyword>
<keyword id="KW-1003">Cell membrane</keyword>
<keyword id="KW-0139">CF(1)</keyword>
<keyword id="KW-0375">Hydrogen ion transport</keyword>
<keyword id="KW-0406">Ion transport</keyword>
<keyword id="KW-0472">Membrane</keyword>
<keyword id="KW-1185">Reference proteome</keyword>
<keyword id="KW-0813">Transport</keyword>
<protein>
    <recommendedName>
        <fullName evidence="1">ATP synthase gamma chain</fullName>
    </recommendedName>
    <alternativeName>
        <fullName evidence="1">ATP synthase F1 sector gamma subunit</fullName>
    </alternativeName>
    <alternativeName>
        <fullName evidence="1">F-ATPase gamma subunit</fullName>
    </alternativeName>
</protein>
<evidence type="ECO:0000255" key="1">
    <source>
        <dbReference type="HAMAP-Rule" id="MF_00815"/>
    </source>
</evidence>
<sequence length="291" mass="32053">MAGTKEIRTKIKSVQNTRKITKAMEMVAASKMRRAQERMRSARPYAEKIRNVAAHMAQANPEYQHPFMVKRDVKRAGLIVVTTDKGLCGGLNTNVLRAVTNQLRDLQNKGVESQATAIGSKGMQFLGRIGAKVVSNVVHLGDTPHLEKLIGAIKVQLDAFTAGEIDAVYLAYTRFINTMRQEPVVEQLLPLTADKLTQTAAEKQAYSWDYIYEPDAQTVVDELLIRYVEALVYQAVAENMASEQSARMVAMKAASDNAKNVIGELQLVYNKTRQAAITKELSEIVGGAAAV</sequence>
<reference key="1">
    <citation type="journal article" date="2002" name="Nature">
        <title>Genome sequence of the plant pathogen Ralstonia solanacearum.</title>
        <authorList>
            <person name="Salanoubat M."/>
            <person name="Genin S."/>
            <person name="Artiguenave F."/>
            <person name="Gouzy J."/>
            <person name="Mangenot S."/>
            <person name="Arlat M."/>
            <person name="Billault A."/>
            <person name="Brottier P."/>
            <person name="Camus J.-C."/>
            <person name="Cattolico L."/>
            <person name="Chandler M."/>
            <person name="Choisne N."/>
            <person name="Claudel-Renard C."/>
            <person name="Cunnac S."/>
            <person name="Demange N."/>
            <person name="Gaspin C."/>
            <person name="Lavie M."/>
            <person name="Moisan A."/>
            <person name="Robert C."/>
            <person name="Saurin W."/>
            <person name="Schiex T."/>
            <person name="Siguier P."/>
            <person name="Thebault P."/>
            <person name="Whalen M."/>
            <person name="Wincker P."/>
            <person name="Levy M."/>
            <person name="Weissenbach J."/>
            <person name="Boucher C.A."/>
        </authorList>
    </citation>
    <scope>NUCLEOTIDE SEQUENCE [LARGE SCALE GENOMIC DNA]</scope>
    <source>
        <strain>ATCC BAA-1114 / GMI1000</strain>
    </source>
</reference>